<dbReference type="EMBL" id="U20753">
    <property type="protein sequence ID" value="AAC48574.1"/>
    <property type="molecule type" value="Genomic_DNA"/>
</dbReference>
<dbReference type="PIR" id="T11407">
    <property type="entry name" value="T11407"/>
</dbReference>
<dbReference type="RefSeq" id="NP_008256.1">
    <property type="nucleotide sequence ID" value="NC_001700.1"/>
</dbReference>
<dbReference type="SMR" id="P48894"/>
<dbReference type="FunCoup" id="P48894">
    <property type="interactions" value="14"/>
</dbReference>
<dbReference type="STRING" id="9685.ENSFCAP00000025714"/>
<dbReference type="PaxDb" id="9685-ENSFCAP00000025714"/>
<dbReference type="Ensembl" id="ENSFCAT00000032649.1">
    <property type="protein sequence ID" value="ENSFCAP00000025714.1"/>
    <property type="gene ID" value="ENSFCAG00000032064.1"/>
</dbReference>
<dbReference type="GeneID" id="807932"/>
<dbReference type="KEGG" id="fca:807932"/>
<dbReference type="CTD" id="4508"/>
<dbReference type="eggNOG" id="KOG4665">
    <property type="taxonomic scope" value="Eukaryota"/>
</dbReference>
<dbReference type="GeneTree" id="ENSGT00390000005568"/>
<dbReference type="HOGENOM" id="CLU_041018_0_2_1"/>
<dbReference type="InParanoid" id="P48894"/>
<dbReference type="OMA" id="FFDQFMS"/>
<dbReference type="OrthoDB" id="5976622at2759"/>
<dbReference type="Proteomes" id="UP000011712">
    <property type="component" value="Mitochondrion"/>
</dbReference>
<dbReference type="Bgee" id="ENSFCAG00000032064">
    <property type="expression patterns" value="Expressed in zone of skin and 9 other cell types or tissues"/>
</dbReference>
<dbReference type="GO" id="GO:0005743">
    <property type="term" value="C:mitochondrial inner membrane"/>
    <property type="evidence" value="ECO:0007669"/>
    <property type="project" value="UniProtKB-SubCell"/>
</dbReference>
<dbReference type="GO" id="GO:0045259">
    <property type="term" value="C:proton-transporting ATP synthase complex"/>
    <property type="evidence" value="ECO:0000250"/>
    <property type="project" value="UniProtKB"/>
</dbReference>
<dbReference type="GO" id="GO:0015252">
    <property type="term" value="F:proton channel activity"/>
    <property type="evidence" value="ECO:0000250"/>
    <property type="project" value="UniProtKB"/>
</dbReference>
<dbReference type="GO" id="GO:0015986">
    <property type="term" value="P:proton motive force-driven ATP synthesis"/>
    <property type="evidence" value="ECO:0000250"/>
    <property type="project" value="UniProtKB"/>
</dbReference>
<dbReference type="GO" id="GO:1902600">
    <property type="term" value="P:proton transmembrane transport"/>
    <property type="evidence" value="ECO:0000250"/>
    <property type="project" value="UniProtKB"/>
</dbReference>
<dbReference type="CDD" id="cd00310">
    <property type="entry name" value="ATP-synt_Fo_a_6"/>
    <property type="match status" value="1"/>
</dbReference>
<dbReference type="FunFam" id="1.20.120.220:FF:000004">
    <property type="entry name" value="ATP synthase subunit a"/>
    <property type="match status" value="1"/>
</dbReference>
<dbReference type="Gene3D" id="1.20.120.220">
    <property type="entry name" value="ATP synthase, F0 complex, subunit A"/>
    <property type="match status" value="1"/>
</dbReference>
<dbReference type="InterPro" id="IPR000568">
    <property type="entry name" value="ATP_synth_F0_asu"/>
</dbReference>
<dbReference type="InterPro" id="IPR023011">
    <property type="entry name" value="ATP_synth_F0_asu_AS"/>
</dbReference>
<dbReference type="InterPro" id="IPR045083">
    <property type="entry name" value="ATP_synth_F0_asu_bact/mt"/>
</dbReference>
<dbReference type="InterPro" id="IPR035908">
    <property type="entry name" value="F0_ATP_A_sf"/>
</dbReference>
<dbReference type="NCBIfam" id="TIGR01131">
    <property type="entry name" value="ATP_synt_6_or_A"/>
    <property type="match status" value="1"/>
</dbReference>
<dbReference type="PANTHER" id="PTHR11410">
    <property type="entry name" value="ATP SYNTHASE SUBUNIT A"/>
    <property type="match status" value="1"/>
</dbReference>
<dbReference type="PANTHER" id="PTHR11410:SF0">
    <property type="entry name" value="ATP SYNTHASE SUBUNIT A"/>
    <property type="match status" value="1"/>
</dbReference>
<dbReference type="Pfam" id="PF00119">
    <property type="entry name" value="ATP-synt_A"/>
    <property type="match status" value="1"/>
</dbReference>
<dbReference type="PRINTS" id="PR00123">
    <property type="entry name" value="ATPASEA"/>
</dbReference>
<dbReference type="SUPFAM" id="SSF81336">
    <property type="entry name" value="F1F0 ATP synthase subunit A"/>
    <property type="match status" value="1"/>
</dbReference>
<dbReference type="PROSITE" id="PS00449">
    <property type="entry name" value="ATPASE_A"/>
    <property type="match status" value="1"/>
</dbReference>
<comment type="function">
    <text evidence="1">Subunit a, of the mitochondrial membrane ATP synthase complex (F(1)F(0) ATP synthase or Complex V) that produces ATP from ADP in the presence of a proton gradient across the membrane which is generated by electron transport complexes of the respiratory chain. ATP synthase complex consist of a soluble F(1) head domain - the catalytic core - and a membrane F(1) domain - the membrane proton channel. These two domains are linked by a central stalk rotating inside the F(1) region and a stationary peripheral stalk. During catalysis, ATP synthesis in the catalytic domain of F(1) is coupled via a rotary mechanism of the central stalk subunits to proton translocation. With the subunit c (ATP5MC1), forms the proton-conducting channel in the F(0) domain, that contains two crucial half-channels (inlet and outlet) that facilitate proton movement from the mitochondrial intermembrane space (IMS) into the matrix. Protons are taken up via the inlet half-channel and released through the outlet half-channel, following a Grotthuss mechanism.</text>
</comment>
<comment type="catalytic activity">
    <reaction evidence="1">
        <text>H(+)(in) = H(+)(out)</text>
        <dbReference type="Rhea" id="RHEA:34979"/>
        <dbReference type="ChEBI" id="CHEBI:15378"/>
    </reaction>
</comment>
<comment type="subunit">
    <text evidence="1">Component of the ATP synthase complex composed at least of ATP5F1A/subunit alpha, ATP5F1B/subunit beta, ATP5MC1/subunit c (homooctomer), MT-ATP6/subunit a, MT-ATP8/subunit 8, ATP5ME/subunit e, ATP5MF/subunit f, ATP5MG/subunit g, ATP5MK/subunit k, ATP5MJ/subunit j, ATP5F1C/subunit gamma, ATP5F1D/subunit delta, ATP5F1E/subunit epsilon, ATP5PF/subunit F6, ATP5PB/subunit b, ATP5PD/subunit d, ATP5PO/subunit OSCP. ATP synthase complex consists of a soluble F(1) head domain (subunits alpha(3) and beta(3)) - the catalytic core - and a membrane F(0) domain - the membrane proton channel (subunits c, a, 8, e, f, g, k and j). These two domains are linked by a central stalk (subunits gamma, delta, and epsilon) rotating inside the F1 region and a stationary peripheral stalk (subunits F6, b, d, and OSCP). Interacts with DNAJC30; interaction is direct.</text>
</comment>
<comment type="subcellular location">
    <subcellularLocation>
        <location>Mitochondrion inner membrane</location>
        <topology>Multi-pass membrane protein</topology>
    </subcellularLocation>
</comment>
<comment type="similarity">
    <text evidence="3">Belongs to the ATPase A chain family.</text>
</comment>
<reference key="1">
    <citation type="journal article" date="1996" name="Genomics">
        <title>Complete nucleotide sequences of the domestic cat (Felis catus) mitochondrial genome and a transposed mtDNA tandem repeat (Numt) in the nuclear genome.</title>
        <authorList>
            <person name="Lopez J.V."/>
            <person name="Cevario S."/>
            <person name="O'Brien S.J."/>
        </authorList>
    </citation>
    <scope>NUCLEOTIDE SEQUENCE [LARGE SCALE GENOMIC DNA]</scope>
    <source>
        <strain evidence="4">Abyssinian</strain>
        <tissue>Blood</tissue>
    </source>
</reference>
<proteinExistence type="inferred from homology"/>
<sequence>MNENLFASFTTPTMMGLPIVILIIMFPSILFPSPNRLINNRLVSLQQWLVQLTSKQMLAIHNHKGQTWALMLMSLILFIGSTNLLGLLPHSFTPTTQLSMNLGMAIPLWAGTVITGFRHKTKASLAHFLPQGTPVPLIPMLVVIETISLFIQPMALAVRLTANITAGHLLMHLIGGAALALMNISTSIALITFTILILLTILEFAVALIQAYVFTLLVSLYLHDNT</sequence>
<keyword id="KW-0066">ATP synthesis</keyword>
<keyword id="KW-0138">CF(0)</keyword>
<keyword id="KW-0375">Hydrogen ion transport</keyword>
<keyword id="KW-0406">Ion transport</keyword>
<keyword id="KW-0472">Membrane</keyword>
<keyword id="KW-0496">Mitochondrion</keyword>
<keyword id="KW-0999">Mitochondrion inner membrane</keyword>
<keyword id="KW-1185">Reference proteome</keyword>
<keyword id="KW-0812">Transmembrane</keyword>
<keyword id="KW-1133">Transmembrane helix</keyword>
<keyword id="KW-0813">Transport</keyword>
<feature type="chain" id="PRO_0000082121" description="ATP synthase F(0) complex subunit a">
    <location>
        <begin position="1"/>
        <end position="226"/>
    </location>
</feature>
<feature type="transmembrane region" description="Helical" evidence="2">
    <location>
        <begin position="12"/>
        <end position="32"/>
    </location>
</feature>
<feature type="transmembrane region" description="Helical" evidence="2">
    <location>
        <begin position="68"/>
        <end position="88"/>
    </location>
</feature>
<feature type="transmembrane region" description="Helical" evidence="2">
    <location>
        <begin position="97"/>
        <end position="117"/>
    </location>
</feature>
<feature type="transmembrane region" description="Helical" evidence="2">
    <location>
        <begin position="138"/>
        <end position="158"/>
    </location>
</feature>
<feature type="transmembrane region" description="Helical" evidence="2">
    <location>
        <begin position="164"/>
        <end position="184"/>
    </location>
</feature>
<feature type="transmembrane region" description="Helical" evidence="2">
    <location>
        <begin position="200"/>
        <end position="222"/>
    </location>
</feature>
<name>ATP6_FELCA</name>
<accession>P48894</accession>
<geneLocation type="mitochondrion"/>
<protein>
    <recommendedName>
        <fullName evidence="1">ATP synthase F(0) complex subunit a</fullName>
    </recommendedName>
    <alternativeName>
        <fullName>F-ATPase protein 6</fullName>
    </alternativeName>
    <alternativeName>
        <fullName evidence="1">Proton-conducting channel, ATP synthase F(0) complex subunit a</fullName>
    </alternativeName>
</protein>
<gene>
    <name evidence="1" type="primary">MT-ATP6</name>
    <name type="synonym">ATP6</name>
    <name type="synonym">ATPASE6</name>
    <name type="synonym">MTATP6</name>
</gene>
<organism>
    <name type="scientific">Felis catus</name>
    <name type="common">Cat</name>
    <name type="synonym">Felis silvestris catus</name>
    <dbReference type="NCBI Taxonomy" id="9685"/>
    <lineage>
        <taxon>Eukaryota</taxon>
        <taxon>Metazoa</taxon>
        <taxon>Chordata</taxon>
        <taxon>Craniata</taxon>
        <taxon>Vertebrata</taxon>
        <taxon>Euteleostomi</taxon>
        <taxon>Mammalia</taxon>
        <taxon>Eutheria</taxon>
        <taxon>Laurasiatheria</taxon>
        <taxon>Carnivora</taxon>
        <taxon>Feliformia</taxon>
        <taxon>Felidae</taxon>
        <taxon>Felinae</taxon>
        <taxon>Felis</taxon>
    </lineage>
</organism>
<evidence type="ECO:0000250" key="1">
    <source>
        <dbReference type="UniProtKB" id="P00846"/>
    </source>
</evidence>
<evidence type="ECO:0000255" key="2"/>
<evidence type="ECO:0000305" key="3"/>
<evidence type="ECO:0000312" key="4">
    <source>
        <dbReference type="Proteomes" id="UP000011712"/>
    </source>
</evidence>